<evidence type="ECO:0000255" key="1">
    <source>
        <dbReference type="HAMAP-Rule" id="MF_00484"/>
    </source>
</evidence>
<keyword id="KW-0320">Glycogen biosynthesis</keyword>
<keyword id="KW-0328">Glycosyltransferase</keyword>
<keyword id="KW-0808">Transferase</keyword>
<accession>Q47IJ4</accession>
<comment type="function">
    <text evidence="1">Synthesizes alpha-1,4-glucan chains using ADP-glucose.</text>
</comment>
<comment type="catalytic activity">
    <reaction evidence="1">
        <text>[(1-&gt;4)-alpha-D-glucosyl](n) + ADP-alpha-D-glucose = [(1-&gt;4)-alpha-D-glucosyl](n+1) + ADP + H(+)</text>
        <dbReference type="Rhea" id="RHEA:18189"/>
        <dbReference type="Rhea" id="RHEA-COMP:9584"/>
        <dbReference type="Rhea" id="RHEA-COMP:9587"/>
        <dbReference type="ChEBI" id="CHEBI:15378"/>
        <dbReference type="ChEBI" id="CHEBI:15444"/>
        <dbReference type="ChEBI" id="CHEBI:57498"/>
        <dbReference type="ChEBI" id="CHEBI:456216"/>
        <dbReference type="EC" id="2.4.1.21"/>
    </reaction>
</comment>
<comment type="pathway">
    <text evidence="1">Glycan biosynthesis; glycogen biosynthesis.</text>
</comment>
<comment type="similarity">
    <text evidence="1">Belongs to the glycosyltransferase 1 family. Bacterial/plant glycogen synthase subfamily.</text>
</comment>
<name>GLGA_DECAR</name>
<organism>
    <name type="scientific">Dechloromonas aromatica (strain RCB)</name>
    <dbReference type="NCBI Taxonomy" id="159087"/>
    <lineage>
        <taxon>Bacteria</taxon>
        <taxon>Pseudomonadati</taxon>
        <taxon>Pseudomonadota</taxon>
        <taxon>Betaproteobacteria</taxon>
        <taxon>Rhodocyclales</taxon>
        <taxon>Azonexaceae</taxon>
        <taxon>Dechloromonas</taxon>
    </lineage>
</organism>
<dbReference type="EC" id="2.4.1.21" evidence="1"/>
<dbReference type="EMBL" id="CP000089">
    <property type="protein sequence ID" value="AAZ45337.1"/>
    <property type="molecule type" value="Genomic_DNA"/>
</dbReference>
<dbReference type="SMR" id="Q47IJ4"/>
<dbReference type="STRING" id="159087.Daro_0580"/>
<dbReference type="CAZy" id="GT5">
    <property type="family name" value="Glycosyltransferase Family 5"/>
</dbReference>
<dbReference type="KEGG" id="dar:Daro_0580"/>
<dbReference type="eggNOG" id="COG0297">
    <property type="taxonomic scope" value="Bacteria"/>
</dbReference>
<dbReference type="HOGENOM" id="CLU_009583_18_4_4"/>
<dbReference type="OrthoDB" id="9808590at2"/>
<dbReference type="UniPathway" id="UPA00164"/>
<dbReference type="GO" id="GO:0009011">
    <property type="term" value="F:alpha-1,4-glucan glucosyltransferase (ADP-glucose donor) activity"/>
    <property type="evidence" value="ECO:0007669"/>
    <property type="project" value="UniProtKB-UniRule"/>
</dbReference>
<dbReference type="GO" id="GO:0004373">
    <property type="term" value="F:alpha-1,4-glucan glucosyltransferase (UDP-glucose donor) activity"/>
    <property type="evidence" value="ECO:0007669"/>
    <property type="project" value="InterPro"/>
</dbReference>
<dbReference type="GO" id="GO:0005978">
    <property type="term" value="P:glycogen biosynthetic process"/>
    <property type="evidence" value="ECO:0007669"/>
    <property type="project" value="UniProtKB-UniRule"/>
</dbReference>
<dbReference type="CDD" id="cd03791">
    <property type="entry name" value="GT5_Glycogen_synthase_DULL1-like"/>
    <property type="match status" value="1"/>
</dbReference>
<dbReference type="Gene3D" id="3.40.50.2000">
    <property type="entry name" value="Glycogen Phosphorylase B"/>
    <property type="match status" value="2"/>
</dbReference>
<dbReference type="HAMAP" id="MF_00484">
    <property type="entry name" value="Glycogen_synth"/>
    <property type="match status" value="1"/>
</dbReference>
<dbReference type="InterPro" id="IPR001296">
    <property type="entry name" value="Glyco_trans_1"/>
</dbReference>
<dbReference type="InterPro" id="IPR011835">
    <property type="entry name" value="GS/SS"/>
</dbReference>
<dbReference type="InterPro" id="IPR013534">
    <property type="entry name" value="Starch_synth_cat_dom"/>
</dbReference>
<dbReference type="NCBIfam" id="TIGR02095">
    <property type="entry name" value="glgA"/>
    <property type="match status" value="1"/>
</dbReference>
<dbReference type="NCBIfam" id="NF001899">
    <property type="entry name" value="PRK00654.1-2"/>
    <property type="match status" value="1"/>
</dbReference>
<dbReference type="PANTHER" id="PTHR45825:SF11">
    <property type="entry name" value="ALPHA AMYLASE DOMAIN-CONTAINING PROTEIN"/>
    <property type="match status" value="1"/>
</dbReference>
<dbReference type="PANTHER" id="PTHR45825">
    <property type="entry name" value="GRANULE-BOUND STARCH SYNTHASE 1, CHLOROPLASTIC/AMYLOPLASTIC"/>
    <property type="match status" value="1"/>
</dbReference>
<dbReference type="Pfam" id="PF08323">
    <property type="entry name" value="Glyco_transf_5"/>
    <property type="match status" value="1"/>
</dbReference>
<dbReference type="Pfam" id="PF00534">
    <property type="entry name" value="Glycos_transf_1"/>
    <property type="match status" value="1"/>
</dbReference>
<dbReference type="SUPFAM" id="SSF53756">
    <property type="entry name" value="UDP-Glycosyltransferase/glycogen phosphorylase"/>
    <property type="match status" value="1"/>
</dbReference>
<proteinExistence type="inferred from homology"/>
<sequence length="485" mass="52712">MSSLSILFATSEMAPWVKTGGLGDVAAALPAALRKAGHDIRVLLPAYPALKQAFPTATTVAELPAFAPGLPASRLLAAQTGKLELLLLDCPELYDRPGNPYLDATGRDWPDNALRFGLLSRVAARLGQPDSPLSWQPDIVHANDWQTALAPAYLHYQGGAASVVTVHNIAFQGCFGREMLAALGLPEHAWRFDGVEYHDQLSFLKAGLQLASQISTVSPTYAREIQDEHFGYGLAPLLRHRSAELRGILNGVDTDLWNPATDPVLATGYAANRLAAKRTNKAALQTEMGLEVTADRPLFGVISRLTSQKGLDLLLTVAEGLPELPAQLVVLGSGDKLMEAGFVELAKRFPAQIVVKIGFDEGLAHRIEAGADCFVMPSRFEPCGLNQMYSLRYGTPPIVRATGGLADTVVDVCEDTLADKSANGFVLDGDTPHALWLTIEHVCRTWQDKKLWQRIQQNGMRRDFSWTHAANEYVALYRDAIATRA</sequence>
<reference key="1">
    <citation type="journal article" date="2009" name="BMC Genomics">
        <title>Metabolic analysis of the soil microbe Dechloromonas aromatica str. RCB: indications of a surprisingly complex life-style and cryptic anaerobic pathways for aromatic degradation.</title>
        <authorList>
            <person name="Salinero K.K."/>
            <person name="Keller K."/>
            <person name="Feil W.S."/>
            <person name="Feil H."/>
            <person name="Trong S."/>
            <person name="Di Bartolo G."/>
            <person name="Lapidus A."/>
        </authorList>
    </citation>
    <scope>NUCLEOTIDE SEQUENCE [LARGE SCALE GENOMIC DNA]</scope>
    <source>
        <strain>RCB</strain>
    </source>
</reference>
<gene>
    <name evidence="1" type="primary">glgA</name>
    <name type="ordered locus">Daro_0580</name>
</gene>
<feature type="chain" id="PRO_0000230239" description="Glycogen synthase">
    <location>
        <begin position="1"/>
        <end position="485"/>
    </location>
</feature>
<feature type="binding site" evidence="1">
    <location>
        <position position="18"/>
    </location>
    <ligand>
        <name>ADP-alpha-D-glucose</name>
        <dbReference type="ChEBI" id="CHEBI:57498"/>
    </ligand>
</feature>
<protein>
    <recommendedName>
        <fullName evidence="1">Glycogen synthase</fullName>
        <ecNumber evidence="1">2.4.1.21</ecNumber>
    </recommendedName>
    <alternativeName>
        <fullName evidence="1">Starch [bacterial glycogen] synthase</fullName>
    </alternativeName>
</protein>